<protein>
    <recommendedName>
        <fullName>Endoglucanase E-5</fullName>
        <ecNumber>3.2.1.4</ecNumber>
    </recommendedName>
    <alternativeName>
        <fullName>Cellulase E-5</fullName>
    </alternativeName>
    <alternativeName>
        <fullName>Cellulase E5</fullName>
    </alternativeName>
    <alternativeName>
        <fullName>Endo-1,4-beta-glucanase E-4</fullName>
    </alternativeName>
</protein>
<comment type="catalytic activity">
    <reaction>
        <text>Endohydrolysis of (1-&gt;4)-beta-D-glucosidic linkages in cellulose, lichenin and cereal beta-D-glucans.</text>
        <dbReference type="EC" id="3.2.1.4"/>
    </reaction>
</comment>
<comment type="pathway">
    <text>Glycan metabolism; cellulose degradation.</text>
</comment>
<comment type="similarity">
    <text evidence="4">Belongs to the glycosyl hydrolase 5 (cellulase A) family.</text>
</comment>
<proteinExistence type="evidence at protein level"/>
<name>GUN5_THEFU</name>
<dbReference type="EC" id="3.2.1.4"/>
<dbReference type="EMBL" id="L01577">
    <property type="protein sequence ID" value="AAC09379.1"/>
    <property type="molecule type" value="Genomic_DNA"/>
</dbReference>
<dbReference type="PIR" id="C42360">
    <property type="entry name" value="C42360"/>
</dbReference>
<dbReference type="PDB" id="2CKR">
    <property type="method" value="X-ray"/>
    <property type="resolution" value="1.77 A"/>
    <property type="chains" value="A/B=161-466"/>
</dbReference>
<dbReference type="PDB" id="2CKS">
    <property type="method" value="X-ray"/>
    <property type="resolution" value="1.60 A"/>
    <property type="chains" value="A/B=161-466"/>
</dbReference>
<dbReference type="PDBsum" id="2CKR"/>
<dbReference type="PDBsum" id="2CKS"/>
<dbReference type="SMR" id="Q01786"/>
<dbReference type="CAZy" id="CBM2">
    <property type="family name" value="Carbohydrate-Binding Module Family 2"/>
</dbReference>
<dbReference type="CAZy" id="GH5">
    <property type="family name" value="Glycoside Hydrolase Family 5"/>
</dbReference>
<dbReference type="UniPathway" id="UPA00696"/>
<dbReference type="EvolutionaryTrace" id="Q01786"/>
<dbReference type="GO" id="GO:0008810">
    <property type="term" value="F:cellulase activity"/>
    <property type="evidence" value="ECO:0007669"/>
    <property type="project" value="UniProtKB-EC"/>
</dbReference>
<dbReference type="GO" id="GO:0030247">
    <property type="term" value="F:polysaccharide binding"/>
    <property type="evidence" value="ECO:0007669"/>
    <property type="project" value="InterPro"/>
</dbReference>
<dbReference type="GO" id="GO:0030245">
    <property type="term" value="P:cellulose catabolic process"/>
    <property type="evidence" value="ECO:0007669"/>
    <property type="project" value="UniProtKB-UniPathway"/>
</dbReference>
<dbReference type="Gene3D" id="2.60.40.290">
    <property type="match status" value="1"/>
</dbReference>
<dbReference type="Gene3D" id="3.20.20.80">
    <property type="entry name" value="Glycosidases"/>
    <property type="match status" value="1"/>
</dbReference>
<dbReference type="InterPro" id="IPR001919">
    <property type="entry name" value="CBD2"/>
</dbReference>
<dbReference type="InterPro" id="IPR008965">
    <property type="entry name" value="CBM2/CBM3_carb-bd_dom_sf"/>
</dbReference>
<dbReference type="InterPro" id="IPR012291">
    <property type="entry name" value="CBM2_carb-bd_dom_sf"/>
</dbReference>
<dbReference type="InterPro" id="IPR001547">
    <property type="entry name" value="Glyco_hydro_5"/>
</dbReference>
<dbReference type="InterPro" id="IPR018087">
    <property type="entry name" value="Glyco_hydro_5_CS"/>
</dbReference>
<dbReference type="InterPro" id="IPR017853">
    <property type="entry name" value="Glycoside_hydrolase_SF"/>
</dbReference>
<dbReference type="PANTHER" id="PTHR34142">
    <property type="entry name" value="ENDO-BETA-1,4-GLUCANASE A"/>
    <property type="match status" value="1"/>
</dbReference>
<dbReference type="PANTHER" id="PTHR34142:SF1">
    <property type="entry name" value="GLYCOSIDE HYDROLASE FAMILY 5 DOMAIN-CONTAINING PROTEIN"/>
    <property type="match status" value="1"/>
</dbReference>
<dbReference type="Pfam" id="PF00553">
    <property type="entry name" value="CBM_2"/>
    <property type="match status" value="1"/>
</dbReference>
<dbReference type="Pfam" id="PF00150">
    <property type="entry name" value="Cellulase"/>
    <property type="match status" value="1"/>
</dbReference>
<dbReference type="SMART" id="SM00637">
    <property type="entry name" value="CBD_II"/>
    <property type="match status" value="1"/>
</dbReference>
<dbReference type="SUPFAM" id="SSF51445">
    <property type="entry name" value="(Trans)glycosidases"/>
    <property type="match status" value="1"/>
</dbReference>
<dbReference type="SUPFAM" id="SSF49384">
    <property type="entry name" value="Carbohydrate-binding domain"/>
    <property type="match status" value="1"/>
</dbReference>
<dbReference type="PROSITE" id="PS51173">
    <property type="entry name" value="CBM2"/>
    <property type="match status" value="1"/>
</dbReference>
<dbReference type="PROSITE" id="PS00659">
    <property type="entry name" value="GLYCOSYL_HYDROL_F5"/>
    <property type="match status" value="1"/>
</dbReference>
<gene>
    <name type="primary">celE</name>
</gene>
<reference key="1">
    <citation type="journal article" date="1991" name="J. Bacteriol.">
        <title>DNA sequences of three beta-1,4-endoglucanase genes from Thermomonospora fusca.</title>
        <authorList>
            <person name="Lao G."/>
            <person name="Ghangas G.S."/>
            <person name="Jung E.D."/>
            <person name="Wilson D.B."/>
        </authorList>
    </citation>
    <scope>NUCLEOTIDE SEQUENCE [GENOMIC DNA]</scope>
    <source>
        <strain>YX</strain>
    </source>
</reference>
<reference key="2">
    <citation type="submission" date="1998-04" db="EMBL/GenBank/DDBJ databases">
        <authorList>
            <person name="Lao G."/>
            <person name="Ghangas G.S."/>
            <person name="Jung E.D."/>
            <person name="Wilson D.B."/>
        </authorList>
    </citation>
    <scope>SEQUENCE REVISION</scope>
</reference>
<reference key="3">
    <citation type="journal article" date="1993" name="Biotechnol. Bioeng.">
        <title>Activity studies of eight purified cellulases: specificity, synergism, and binding domain effects.</title>
        <authorList>
            <person name="Irwin D.C."/>
            <person name="Spezio M."/>
            <person name="Walker L.P."/>
            <person name="Wilson D.B."/>
        </authorList>
    </citation>
    <scope>PROTEIN SEQUENCE OF 137-142 AND 157-166</scope>
    <source>
        <strain>YX</strain>
    </source>
</reference>
<evidence type="ECO:0000250" key="1">
    <source>
        <dbReference type="UniProtKB" id="O85465"/>
    </source>
</evidence>
<evidence type="ECO:0000255" key="2">
    <source>
        <dbReference type="PROSITE-ProRule" id="PRU01135"/>
    </source>
</evidence>
<evidence type="ECO:0000256" key="3">
    <source>
        <dbReference type="SAM" id="MobiDB-lite"/>
    </source>
</evidence>
<evidence type="ECO:0000305" key="4"/>
<evidence type="ECO:0007829" key="5">
    <source>
        <dbReference type="PDB" id="2CKS"/>
    </source>
</evidence>
<accession>Q01786</accession>
<keyword id="KW-0002">3D-structure</keyword>
<keyword id="KW-0119">Carbohydrate metabolism</keyword>
<keyword id="KW-0136">Cellulose degradation</keyword>
<keyword id="KW-0903">Direct protein sequencing</keyword>
<keyword id="KW-0326">Glycosidase</keyword>
<keyword id="KW-0378">Hydrolase</keyword>
<keyword id="KW-0624">Polysaccharide degradation</keyword>
<keyword id="KW-0732">Signal</keyword>
<feature type="signal peptide">
    <location>
        <begin position="1"/>
        <end position="36"/>
    </location>
</feature>
<feature type="chain" id="PRO_0000007866" description="Endoglucanase E-5">
    <location>
        <begin position="37"/>
        <end position="466"/>
    </location>
</feature>
<feature type="domain" description="CBM2" evidence="2">
    <location>
        <begin position="37"/>
        <end position="139"/>
    </location>
</feature>
<feature type="region of interest" description="Disordered" evidence="3">
    <location>
        <begin position="129"/>
        <end position="166"/>
    </location>
</feature>
<feature type="active site" description="Proton donor" evidence="1">
    <location>
        <position position="299"/>
    </location>
</feature>
<feature type="active site" description="Nucleophile" evidence="1">
    <location>
        <position position="391"/>
    </location>
</feature>
<feature type="helix" evidence="5">
    <location>
        <begin position="164"/>
        <end position="168"/>
    </location>
</feature>
<feature type="strand" evidence="5">
    <location>
        <begin position="172"/>
        <end position="174"/>
    </location>
</feature>
<feature type="strand" evidence="5">
    <location>
        <begin position="177"/>
        <end position="179"/>
    </location>
</feature>
<feature type="strand" evidence="5">
    <location>
        <begin position="189"/>
        <end position="192"/>
    </location>
</feature>
<feature type="helix" evidence="5">
    <location>
        <begin position="196"/>
        <end position="199"/>
    </location>
</feature>
<feature type="helix" evidence="5">
    <location>
        <begin position="200"/>
        <end position="202"/>
    </location>
</feature>
<feature type="helix" evidence="5">
    <location>
        <begin position="205"/>
        <end position="213"/>
    </location>
</feature>
<feature type="strand" evidence="5">
    <location>
        <begin position="218"/>
        <end position="227"/>
    </location>
</feature>
<feature type="helix" evidence="5">
    <location>
        <begin position="231"/>
        <end position="233"/>
    </location>
</feature>
<feature type="helix" evidence="5">
    <location>
        <begin position="235"/>
        <end position="250"/>
    </location>
</feature>
<feature type="turn" evidence="5">
    <location>
        <begin position="251"/>
        <end position="253"/>
    </location>
</feature>
<feature type="strand" evidence="5">
    <location>
        <begin position="255"/>
        <end position="261"/>
    </location>
</feature>
<feature type="helix" evidence="5">
    <location>
        <begin position="268"/>
        <end position="271"/>
    </location>
</feature>
<feature type="helix" evidence="5">
    <location>
        <begin position="272"/>
        <end position="286"/>
    </location>
</feature>
<feature type="strand" evidence="5">
    <location>
        <begin position="290"/>
        <end position="295"/>
    </location>
</feature>
<feature type="helix" evidence="5">
    <location>
        <begin position="305"/>
        <end position="322"/>
    </location>
</feature>
<feature type="strand" evidence="5">
    <location>
        <begin position="328"/>
        <end position="330"/>
    </location>
</feature>
<feature type="helix" evidence="5">
    <location>
        <begin position="333"/>
        <end position="336"/>
    </location>
</feature>
<feature type="helix" evidence="5">
    <location>
        <begin position="340"/>
        <end position="342"/>
    </location>
</feature>
<feature type="helix" evidence="5">
    <location>
        <begin position="347"/>
        <end position="351"/>
    </location>
</feature>
<feature type="strand" evidence="5">
    <location>
        <begin position="357"/>
        <end position="366"/>
    </location>
</feature>
<feature type="turn" evidence="5">
    <location>
        <begin position="367"/>
        <end position="369"/>
    </location>
</feature>
<feature type="helix" evidence="5">
    <location>
        <begin position="372"/>
        <end position="384"/>
    </location>
</feature>
<feature type="strand" evidence="5">
    <location>
        <begin position="387"/>
        <end position="395"/>
    </location>
</feature>
<feature type="helix" evidence="5">
    <location>
        <begin position="405"/>
        <end position="418"/>
    </location>
</feature>
<feature type="strand" evidence="5">
    <location>
        <begin position="422"/>
        <end position="425"/>
    </location>
</feature>
<feature type="strand" evidence="5">
    <location>
        <begin position="435"/>
        <end position="437"/>
    </location>
</feature>
<feature type="helix" evidence="5">
    <location>
        <begin position="441"/>
        <end position="444"/>
    </location>
</feature>
<feature type="helix" evidence="5">
    <location>
        <begin position="450"/>
        <end position="452"/>
    </location>
</feature>
<feature type="helix" evidence="5">
    <location>
        <begin position="455"/>
        <end position="465"/>
    </location>
</feature>
<organism>
    <name type="scientific">Thermobifida fusca</name>
    <name type="common">Thermomonospora fusca</name>
    <dbReference type="NCBI Taxonomy" id="2021"/>
    <lineage>
        <taxon>Bacteria</taxon>
        <taxon>Bacillati</taxon>
        <taxon>Actinomycetota</taxon>
        <taxon>Actinomycetes</taxon>
        <taxon>Streptosporangiales</taxon>
        <taxon>Nocardiopsidaceae</taxon>
        <taxon>Thermobifida</taxon>
    </lineage>
</organism>
<sequence>MAKSPAARKGXPPVAVAVTAALALLIALLSPGVAQAAGLTATVTKESSWDNGYSASVTVRNDTSSTVSQWEVVLTLPGGTTVAQVWNAQHTSSGNSHTFTGVSWNSTIPPGGTASSGFIASGSGEPTHCTINGAPCDEGSEPGGPGGPGTPSPDPGTQPGTGTPVERYGKVQVCGTQLCDEHGNPVQLRGMSTHGIQWFDHCLTDSSLDALAYDWKADIIRLSMYIQEDGYETNPRGFTDRMHQLIDMATARGLYVIVDWHILTPGDPHYNLDRAKTFFAEIAQRHASKTNVLYEIANEPNGVSWASIKSYAEEVIPVIRQRDPDSVIIVGTRGWSSLGVSEGSGPAEIAANPVNASNIMYAFHFYAASHRDNYLNALREASELFPVFVTEFGTETYTGDGANDFQMADRYIDLMAERKIGWTKWNYSDDFRSGAVFQPGTCASGGPWSGSSLKASGQWVRSKLQS</sequence>